<name>CSST1_CONGH</name>
<accession>P0DW20</accession>
<comment type="function">
    <text evidence="1">Moderately activates human somatostatin receptors (SSTR) with a preferential activation of SSTR1 and SSTR4. In vivo, does not cause behavioral changes in mice within a few minutes of intracranial injection, but causes a progressive loss of movement thereafter. Four to five hours after injection, mice recover, even with the highest dose tested. Shows antinociception and antihyperalgesia activities in two mouse models of acute pain, most probably by acting outside the central nervous system.</text>
</comment>
<comment type="subcellular location">
    <subcellularLocation>
        <location evidence="6">Secreted</location>
    </subcellularLocation>
</comment>
<comment type="tissue specificity">
    <text evidence="6">Expressed by the venom duct.</text>
</comment>
<comment type="domain">
    <text evidence="5">The cysteine framework is C-C.</text>
</comment>
<comment type="miscellaneous">
    <text evidence="1">This peptide is an evolutionarily optimized stable analog of somatostatin. In addition, it adopts nearly identical conformations as in the somatostatin drug analog Octreotide. As this drug, it contains a D-Trp at the same position, whose synthesis is a common strategy used for enhancing the metabolic stability of compounds in drug design.</text>
</comment>
<comment type="miscellaneous">
    <text evidence="3">Consomatins evolved by gene duplication of a 'Somatostatin and related peptides (SSRP)' gene expressed in the snail neuroendocrine system.</text>
</comment>
<comment type="miscellaneous">
    <text evidence="1">Negative results: does not activate any of the other 313 GPCRs tested. Shows little or no activating activity at the SSTR2, SSTR3 and SSTR5.</text>
</comment>
<comment type="similarity">
    <text evidence="5">Belongs to the conotoxin C superfamily. Consomatin family.</text>
</comment>
<keyword id="KW-0208">D-amino acid</keyword>
<keyword id="KW-1015">Disulfide bond</keyword>
<keyword id="KW-1213">G-protein coupled receptor impairing toxin</keyword>
<keyword id="KW-0379">Hydroxylation</keyword>
<keyword id="KW-0964">Secreted</keyword>
<keyword id="KW-0732">Signal</keyword>
<keyword id="KW-0800">Toxin</keyword>
<sequence>MQTACWVMVMMMVWITAPLSEGGKLNDVIRGLVPDDVTPQLILRSLFFHRPSDSVVRPTVPVRICYWKVCPPSP</sequence>
<reference key="1">
    <citation type="journal article" date="2022" name="Sci. Adv.">
        <title>Somatostatin venom analogs evolved by fish-hunting cone snails: from prey capture behavior to identifying drug leads.</title>
        <authorList>
            <person name="Ramiro I.B.L."/>
            <person name="Bjoern-Yoshimoto W.E."/>
            <person name="Imperial J.S."/>
            <person name="Gajewiak J."/>
            <person name="Salcedo P.F."/>
            <person name="Watkins M."/>
            <person name="Taylor D."/>
            <person name="Resager W."/>
            <person name="Ueberheide B."/>
            <person name="Braeuner-Osborne H."/>
            <person name="Whitby F.G."/>
            <person name="Hill C.P."/>
            <person name="Martin L.F."/>
            <person name="Patwardhan A."/>
            <person name="Concepcion G.P."/>
            <person name="Olivera B.M."/>
            <person name="Safavi-Hemami H."/>
        </authorList>
    </citation>
    <scope>NUCLEOTIDE SEQUENCE [MRNA]</scope>
    <scope>PROBABLE D-AMINO ACID AT TRP-67</scope>
    <scope>PROBABLE HYDROXYLATION AT PRO-71</scope>
    <scope>PROBABLE HYDROXYLATION AT PRO-72</scope>
    <scope>PROBABLE HYDROXYLATION AT PRO-74</scope>
    <scope>PROBABLE DISULFIDE BOND</scope>
    <source>
        <tissue>Venom duct</tissue>
    </source>
</reference>
<reference key="2">
    <citation type="journal article" date="2022" name="Mol. Biol. Evol.">
        <title>Reconstructing the origins of the somatostatin and allatostatin-C signaling systems using the accelerated evolution of biodiverse cone snail venoms.</title>
        <authorList>
            <person name="Koch T.L."/>
            <person name="Ramiro I.B.L."/>
            <person name="Florez-Salcedo P."/>
            <person name="Engholm E."/>
            <person name="Jensen K.J."/>
            <person name="Chase K."/>
            <person name="Olivera B.M."/>
            <person name="Bjoern-Yoshimoto W.E."/>
            <person name="Safavi-Hemami H."/>
        </authorList>
    </citation>
    <scope>NUCLEOTIDE SEQUENCE [MRNA]</scope>
    <source>
        <tissue>Venom duct</tissue>
    </source>
</reference>
<protein>
    <recommendedName>
        <fullName evidence="4">Consomatin Gh1</fullName>
        <shortName evidence="5">ConSST Gh1</shortName>
    </recommendedName>
    <alternativeName>
        <fullName evidence="4">Somatostatin-related peptide</fullName>
        <shortName evidence="4">SSRP</shortName>
    </alternativeName>
</protein>
<feature type="signal peptide" evidence="2">
    <location>
        <begin position="1"/>
        <end position="22"/>
    </location>
</feature>
<feature type="propeptide" id="PRO_0000456121" evidence="6">
    <location>
        <begin position="23"/>
        <end position="57"/>
    </location>
</feature>
<feature type="peptide" id="PRO_0000456122" description="Consomatin Gh1" evidence="6">
    <location>
        <begin position="58"/>
        <end position="74"/>
    </location>
</feature>
<feature type="modified residue" description="D-tryptophan" evidence="1 6">
    <location>
        <position position="67"/>
    </location>
</feature>
<feature type="modified residue" description="4-hydroxyproline" evidence="6">
    <location>
        <position position="71"/>
    </location>
</feature>
<feature type="modified residue" description="4-hydroxyproline" evidence="6">
    <location>
        <position position="72"/>
    </location>
</feature>
<feature type="modified residue" description="4-hydroxyproline" evidence="6">
    <location>
        <position position="74"/>
    </location>
</feature>
<feature type="disulfide bond" evidence="1 6">
    <location>
        <begin position="65"/>
        <end position="70"/>
    </location>
</feature>
<dbReference type="GO" id="GO:0005576">
    <property type="term" value="C:extracellular region"/>
    <property type="evidence" value="ECO:0007669"/>
    <property type="project" value="UniProtKB-SubCell"/>
</dbReference>
<dbReference type="GO" id="GO:0090729">
    <property type="term" value="F:toxin activity"/>
    <property type="evidence" value="ECO:0007669"/>
    <property type="project" value="UniProtKB-KW"/>
</dbReference>
<organism>
    <name type="scientific">Conus grahami</name>
    <name type="common">Cone snail</name>
    <name type="synonym">Africonus grahami</name>
    <dbReference type="NCBI Taxonomy" id="308501"/>
    <lineage>
        <taxon>Eukaryota</taxon>
        <taxon>Metazoa</taxon>
        <taxon>Spiralia</taxon>
        <taxon>Lophotrochozoa</taxon>
        <taxon>Mollusca</taxon>
        <taxon>Gastropoda</taxon>
        <taxon>Caenogastropoda</taxon>
        <taxon>Neogastropoda</taxon>
        <taxon>Conoidea</taxon>
        <taxon>Conidae</taxon>
        <taxon>Conus</taxon>
        <taxon>Lautoconus</taxon>
    </lineage>
</organism>
<evidence type="ECO:0000250" key="1">
    <source>
        <dbReference type="UniProtKB" id="P0DQT5"/>
    </source>
</evidence>
<evidence type="ECO:0000255" key="2"/>
<evidence type="ECO:0000269" key="3">
    <source>
    </source>
</evidence>
<evidence type="ECO:0000303" key="4">
    <source>
    </source>
</evidence>
<evidence type="ECO:0000305" key="5"/>
<evidence type="ECO:0000305" key="6">
    <source>
    </source>
</evidence>
<proteinExistence type="evidence at protein level"/>